<evidence type="ECO:0000255" key="1">
    <source>
        <dbReference type="HAMAP-Rule" id="MF_01631"/>
    </source>
</evidence>
<keyword id="KW-0012">Acyltransferase</keyword>
<keyword id="KW-0133">Cell shape</keyword>
<keyword id="KW-0961">Cell wall biogenesis/degradation</keyword>
<keyword id="KW-0963">Cytoplasm</keyword>
<keyword id="KW-0460">Magnesium</keyword>
<keyword id="KW-0479">Metal-binding</keyword>
<keyword id="KW-0511">Multifunctional enzyme</keyword>
<keyword id="KW-0548">Nucleotidyltransferase</keyword>
<keyword id="KW-0573">Peptidoglycan synthesis</keyword>
<keyword id="KW-0677">Repeat</keyword>
<keyword id="KW-0808">Transferase</keyword>
<comment type="function">
    <text evidence="1">Catalyzes the last two sequential reactions in the de novo biosynthetic pathway for UDP-N-acetylglucosamine (UDP-GlcNAc). The C-terminal domain catalyzes the transfer of acetyl group from acetyl coenzyme A to glucosamine-1-phosphate (GlcN-1-P) to produce N-acetylglucosamine-1-phosphate (GlcNAc-1-P), which is converted into UDP-GlcNAc by the transfer of uridine 5-monophosphate (from uridine 5-triphosphate), a reaction catalyzed by the N-terminal domain.</text>
</comment>
<comment type="catalytic activity">
    <reaction evidence="1">
        <text>alpha-D-glucosamine 1-phosphate + acetyl-CoA = N-acetyl-alpha-D-glucosamine 1-phosphate + CoA + H(+)</text>
        <dbReference type="Rhea" id="RHEA:13725"/>
        <dbReference type="ChEBI" id="CHEBI:15378"/>
        <dbReference type="ChEBI" id="CHEBI:57287"/>
        <dbReference type="ChEBI" id="CHEBI:57288"/>
        <dbReference type="ChEBI" id="CHEBI:57776"/>
        <dbReference type="ChEBI" id="CHEBI:58516"/>
        <dbReference type="EC" id="2.3.1.157"/>
    </reaction>
</comment>
<comment type="catalytic activity">
    <reaction evidence="1">
        <text>N-acetyl-alpha-D-glucosamine 1-phosphate + UTP + H(+) = UDP-N-acetyl-alpha-D-glucosamine + diphosphate</text>
        <dbReference type="Rhea" id="RHEA:13509"/>
        <dbReference type="ChEBI" id="CHEBI:15378"/>
        <dbReference type="ChEBI" id="CHEBI:33019"/>
        <dbReference type="ChEBI" id="CHEBI:46398"/>
        <dbReference type="ChEBI" id="CHEBI:57705"/>
        <dbReference type="ChEBI" id="CHEBI:57776"/>
        <dbReference type="EC" id="2.7.7.23"/>
    </reaction>
</comment>
<comment type="cofactor">
    <cofactor evidence="1">
        <name>Mg(2+)</name>
        <dbReference type="ChEBI" id="CHEBI:18420"/>
    </cofactor>
    <text evidence="1">Binds 1 Mg(2+) ion per subunit.</text>
</comment>
<comment type="pathway">
    <text evidence="1">Nucleotide-sugar biosynthesis; UDP-N-acetyl-alpha-D-glucosamine biosynthesis; N-acetyl-alpha-D-glucosamine 1-phosphate from alpha-D-glucosamine 6-phosphate (route II): step 2/2.</text>
</comment>
<comment type="pathway">
    <text evidence="1">Nucleotide-sugar biosynthesis; UDP-N-acetyl-alpha-D-glucosamine biosynthesis; UDP-N-acetyl-alpha-D-glucosamine from N-acetyl-alpha-D-glucosamine 1-phosphate: step 1/1.</text>
</comment>
<comment type="pathway">
    <text evidence="1">Bacterial outer membrane biogenesis; LPS lipid A biosynthesis.</text>
</comment>
<comment type="subunit">
    <text evidence="1">Homotrimer.</text>
</comment>
<comment type="subcellular location">
    <subcellularLocation>
        <location evidence="1">Cytoplasm</location>
    </subcellularLocation>
</comment>
<comment type="similarity">
    <text evidence="1">In the N-terminal section; belongs to the N-acetylglucosamine-1-phosphate uridyltransferase family.</text>
</comment>
<comment type="similarity">
    <text evidence="1">In the C-terminal section; belongs to the transferase hexapeptide repeat family.</text>
</comment>
<accession>A2BVS4</accession>
<organism>
    <name type="scientific">Prochlorococcus marinus (strain MIT 9515)</name>
    <dbReference type="NCBI Taxonomy" id="167542"/>
    <lineage>
        <taxon>Bacteria</taxon>
        <taxon>Bacillati</taxon>
        <taxon>Cyanobacteriota</taxon>
        <taxon>Cyanophyceae</taxon>
        <taxon>Synechococcales</taxon>
        <taxon>Prochlorococcaceae</taxon>
        <taxon>Prochlorococcus</taxon>
    </lineage>
</organism>
<feature type="chain" id="PRO_1000056182" description="Bifunctional protein GlmU">
    <location>
        <begin position="1"/>
        <end position="447"/>
    </location>
</feature>
<feature type="region of interest" description="Pyrophosphorylase" evidence="1">
    <location>
        <begin position="1"/>
        <end position="225"/>
    </location>
</feature>
<feature type="region of interest" description="Linker" evidence="1">
    <location>
        <begin position="226"/>
        <end position="246"/>
    </location>
</feature>
<feature type="region of interest" description="N-acetyltransferase" evidence="1">
    <location>
        <begin position="247"/>
        <end position="447"/>
    </location>
</feature>
<feature type="active site" description="Proton acceptor" evidence="1">
    <location>
        <position position="358"/>
    </location>
</feature>
<feature type="binding site" evidence="1">
    <location>
        <begin position="7"/>
        <end position="10"/>
    </location>
    <ligand>
        <name>UDP-N-acetyl-alpha-D-glucosamine</name>
        <dbReference type="ChEBI" id="CHEBI:57705"/>
    </ligand>
</feature>
<feature type="binding site" evidence="1">
    <location>
        <position position="21"/>
    </location>
    <ligand>
        <name>UDP-N-acetyl-alpha-D-glucosamine</name>
        <dbReference type="ChEBI" id="CHEBI:57705"/>
    </ligand>
</feature>
<feature type="binding site" evidence="1">
    <location>
        <position position="73"/>
    </location>
    <ligand>
        <name>UDP-N-acetyl-alpha-D-glucosamine</name>
        <dbReference type="ChEBI" id="CHEBI:57705"/>
    </ligand>
</feature>
<feature type="binding site" evidence="1">
    <location>
        <begin position="78"/>
        <end position="79"/>
    </location>
    <ligand>
        <name>UDP-N-acetyl-alpha-D-glucosamine</name>
        <dbReference type="ChEBI" id="CHEBI:57705"/>
    </ligand>
</feature>
<feature type="binding site" evidence="1">
    <location>
        <position position="103"/>
    </location>
    <ligand>
        <name>Mg(2+)</name>
        <dbReference type="ChEBI" id="CHEBI:18420"/>
    </ligand>
</feature>
<feature type="binding site" evidence="1">
    <location>
        <position position="140"/>
    </location>
    <ligand>
        <name>UDP-N-acetyl-alpha-D-glucosamine</name>
        <dbReference type="ChEBI" id="CHEBI:57705"/>
    </ligand>
</feature>
<feature type="binding site" evidence="1">
    <location>
        <position position="154"/>
    </location>
    <ligand>
        <name>UDP-N-acetyl-alpha-D-glucosamine</name>
        <dbReference type="ChEBI" id="CHEBI:57705"/>
    </ligand>
</feature>
<feature type="binding site" evidence="1">
    <location>
        <position position="169"/>
    </location>
    <ligand>
        <name>UDP-N-acetyl-alpha-D-glucosamine</name>
        <dbReference type="ChEBI" id="CHEBI:57705"/>
    </ligand>
</feature>
<feature type="binding site" evidence="1">
    <location>
        <position position="223"/>
    </location>
    <ligand>
        <name>Mg(2+)</name>
        <dbReference type="ChEBI" id="CHEBI:18420"/>
    </ligand>
</feature>
<feature type="binding site" evidence="1">
    <location>
        <position position="223"/>
    </location>
    <ligand>
        <name>UDP-N-acetyl-alpha-D-glucosamine</name>
        <dbReference type="ChEBI" id="CHEBI:57705"/>
    </ligand>
</feature>
<feature type="binding site" evidence="1">
    <location>
        <position position="328"/>
    </location>
    <ligand>
        <name>UDP-N-acetyl-alpha-D-glucosamine</name>
        <dbReference type="ChEBI" id="CHEBI:57705"/>
    </ligand>
</feature>
<feature type="binding site" evidence="1">
    <location>
        <position position="346"/>
    </location>
    <ligand>
        <name>UDP-N-acetyl-alpha-D-glucosamine</name>
        <dbReference type="ChEBI" id="CHEBI:57705"/>
    </ligand>
</feature>
<feature type="binding site" evidence="1">
    <location>
        <position position="361"/>
    </location>
    <ligand>
        <name>UDP-N-acetyl-alpha-D-glucosamine</name>
        <dbReference type="ChEBI" id="CHEBI:57705"/>
    </ligand>
</feature>
<feature type="binding site" evidence="1">
    <location>
        <position position="372"/>
    </location>
    <ligand>
        <name>UDP-N-acetyl-alpha-D-glucosamine</name>
        <dbReference type="ChEBI" id="CHEBI:57705"/>
    </ligand>
</feature>
<feature type="binding site" evidence="1">
    <location>
        <position position="375"/>
    </location>
    <ligand>
        <name>acetyl-CoA</name>
        <dbReference type="ChEBI" id="CHEBI:57288"/>
    </ligand>
</feature>
<feature type="binding site" evidence="1">
    <location>
        <position position="418"/>
    </location>
    <ligand>
        <name>acetyl-CoA</name>
        <dbReference type="ChEBI" id="CHEBI:57288"/>
    </ligand>
</feature>
<feature type="binding site" evidence="1">
    <location>
        <position position="435"/>
    </location>
    <ligand>
        <name>acetyl-CoA</name>
        <dbReference type="ChEBI" id="CHEBI:57288"/>
    </ligand>
</feature>
<proteinExistence type="inferred from homology"/>
<protein>
    <recommendedName>
        <fullName evidence="1">Bifunctional protein GlmU</fullName>
    </recommendedName>
    <domain>
        <recommendedName>
            <fullName evidence="1">UDP-N-acetylglucosamine pyrophosphorylase</fullName>
            <ecNumber evidence="1">2.7.7.23</ecNumber>
        </recommendedName>
        <alternativeName>
            <fullName evidence="1">N-acetylglucosamine-1-phosphate uridyltransferase</fullName>
        </alternativeName>
    </domain>
    <domain>
        <recommendedName>
            <fullName evidence="1">Glucosamine-1-phosphate N-acetyltransferase</fullName>
            <ecNumber evidence="1">2.3.1.157</ecNumber>
        </recommendedName>
    </domain>
</protein>
<reference key="1">
    <citation type="journal article" date="2007" name="PLoS Genet.">
        <title>Patterns and implications of gene gain and loss in the evolution of Prochlorococcus.</title>
        <authorList>
            <person name="Kettler G.C."/>
            <person name="Martiny A.C."/>
            <person name="Huang K."/>
            <person name="Zucker J."/>
            <person name="Coleman M.L."/>
            <person name="Rodrigue S."/>
            <person name="Chen F."/>
            <person name="Lapidus A."/>
            <person name="Ferriera S."/>
            <person name="Johnson J."/>
            <person name="Steglich C."/>
            <person name="Church G.M."/>
            <person name="Richardson P."/>
            <person name="Chisholm S.W."/>
        </authorList>
    </citation>
    <scope>NUCLEOTIDE SEQUENCE [LARGE SCALE GENOMIC DNA]</scope>
    <source>
        <strain>MIT 9515</strain>
    </source>
</reference>
<gene>
    <name evidence="1" type="primary">glmU</name>
    <name type="ordered locus">P9515_06761</name>
</gene>
<sequence length="447" mass="49373">MLTVAILAAGKGTRMASSLPKVLHKLSGKTLLQRVIDSCNELKPDKIFIIVGHKSKEVKDSVFKNNNIHFIVQKPQKGTGHAVQVLSQKVKKHDGKLIVLNGDVPLIKGETLKKLIHYHDSQKADVSLITTKKKNPHGYGRVFAKDNLIEMIIEEKDCNNVQKSNLLINAGIYCFNWKSLSKIINTIKSNNKQNEIYLTDAIYLLKKSYSFEILDNGELQGINNRVQLSKCEETIQNLIKEKHMLGGVTFINPASCTVSEESIIGKDVIIDANTHIRGNSKISNNCKIGPNTFIKDTIINENCEIINSTIFNSVLMDFVNIGPYSHIRPNCEISSYSRIGNFVEIKNSQLDKEVKVNHLSYIGDSTVGKHTNIGAGTITANFDGKKKHPTFIGENSSIGANTVLIAPINLGDSVTTGAGSVITKDSQNNSLAIARTKQVNIENWKKN</sequence>
<dbReference type="EC" id="2.7.7.23" evidence="1"/>
<dbReference type="EC" id="2.3.1.157" evidence="1"/>
<dbReference type="EMBL" id="CP000552">
    <property type="protein sequence ID" value="ABM71885.1"/>
    <property type="molecule type" value="Genomic_DNA"/>
</dbReference>
<dbReference type="RefSeq" id="WP_011819990.1">
    <property type="nucleotide sequence ID" value="NC_008817.1"/>
</dbReference>
<dbReference type="SMR" id="A2BVS4"/>
<dbReference type="STRING" id="167542.P9515_06761"/>
<dbReference type="GeneID" id="60200701"/>
<dbReference type="KEGG" id="pmc:P9515_06761"/>
<dbReference type="eggNOG" id="COG1207">
    <property type="taxonomic scope" value="Bacteria"/>
</dbReference>
<dbReference type="HOGENOM" id="CLU_029499_15_2_3"/>
<dbReference type="OrthoDB" id="9775031at2"/>
<dbReference type="UniPathway" id="UPA00113">
    <property type="reaction ID" value="UER00532"/>
</dbReference>
<dbReference type="UniPathway" id="UPA00113">
    <property type="reaction ID" value="UER00533"/>
</dbReference>
<dbReference type="UniPathway" id="UPA00973"/>
<dbReference type="Proteomes" id="UP000001589">
    <property type="component" value="Chromosome"/>
</dbReference>
<dbReference type="GO" id="GO:0031470">
    <property type="term" value="C:carboxysome"/>
    <property type="evidence" value="ECO:0007669"/>
    <property type="project" value="UniProtKB-ARBA"/>
</dbReference>
<dbReference type="GO" id="GO:0005737">
    <property type="term" value="C:cytoplasm"/>
    <property type="evidence" value="ECO:0007669"/>
    <property type="project" value="UniProtKB-SubCell"/>
</dbReference>
<dbReference type="GO" id="GO:0016020">
    <property type="term" value="C:membrane"/>
    <property type="evidence" value="ECO:0007669"/>
    <property type="project" value="GOC"/>
</dbReference>
<dbReference type="GO" id="GO:0019134">
    <property type="term" value="F:glucosamine-1-phosphate N-acetyltransferase activity"/>
    <property type="evidence" value="ECO:0007669"/>
    <property type="project" value="UniProtKB-UniRule"/>
</dbReference>
<dbReference type="GO" id="GO:0000287">
    <property type="term" value="F:magnesium ion binding"/>
    <property type="evidence" value="ECO:0007669"/>
    <property type="project" value="UniProtKB-UniRule"/>
</dbReference>
<dbReference type="GO" id="GO:0043886">
    <property type="term" value="F:structural constituent of carboxysome shell"/>
    <property type="evidence" value="ECO:0007669"/>
    <property type="project" value="UniProtKB-ARBA"/>
</dbReference>
<dbReference type="GO" id="GO:0003977">
    <property type="term" value="F:UDP-N-acetylglucosamine diphosphorylase activity"/>
    <property type="evidence" value="ECO:0007669"/>
    <property type="project" value="UniProtKB-UniRule"/>
</dbReference>
<dbReference type="GO" id="GO:0000902">
    <property type="term" value="P:cell morphogenesis"/>
    <property type="evidence" value="ECO:0007669"/>
    <property type="project" value="UniProtKB-UniRule"/>
</dbReference>
<dbReference type="GO" id="GO:0071555">
    <property type="term" value="P:cell wall organization"/>
    <property type="evidence" value="ECO:0007669"/>
    <property type="project" value="UniProtKB-KW"/>
</dbReference>
<dbReference type="GO" id="GO:0009245">
    <property type="term" value="P:lipid A biosynthetic process"/>
    <property type="evidence" value="ECO:0007669"/>
    <property type="project" value="UniProtKB-UniRule"/>
</dbReference>
<dbReference type="GO" id="GO:0009252">
    <property type="term" value="P:peptidoglycan biosynthetic process"/>
    <property type="evidence" value="ECO:0007669"/>
    <property type="project" value="UniProtKB-UniRule"/>
</dbReference>
<dbReference type="GO" id="GO:0008360">
    <property type="term" value="P:regulation of cell shape"/>
    <property type="evidence" value="ECO:0007669"/>
    <property type="project" value="UniProtKB-KW"/>
</dbReference>
<dbReference type="GO" id="GO:0006048">
    <property type="term" value="P:UDP-N-acetylglucosamine biosynthetic process"/>
    <property type="evidence" value="ECO:0007669"/>
    <property type="project" value="UniProtKB-UniPathway"/>
</dbReference>
<dbReference type="CDD" id="cd02540">
    <property type="entry name" value="GT2_GlmU_N_bac"/>
    <property type="match status" value="1"/>
</dbReference>
<dbReference type="CDD" id="cd03353">
    <property type="entry name" value="LbH_GlmU_C"/>
    <property type="match status" value="1"/>
</dbReference>
<dbReference type="Gene3D" id="2.160.10.10">
    <property type="entry name" value="Hexapeptide repeat proteins"/>
    <property type="match status" value="1"/>
</dbReference>
<dbReference type="Gene3D" id="3.90.550.10">
    <property type="entry name" value="Spore Coat Polysaccharide Biosynthesis Protein SpsA, Chain A"/>
    <property type="match status" value="1"/>
</dbReference>
<dbReference type="HAMAP" id="MF_01631">
    <property type="entry name" value="GlmU"/>
    <property type="match status" value="1"/>
</dbReference>
<dbReference type="InterPro" id="IPR005882">
    <property type="entry name" value="Bifunctional_GlmU"/>
</dbReference>
<dbReference type="InterPro" id="IPR050065">
    <property type="entry name" value="GlmU-like"/>
</dbReference>
<dbReference type="InterPro" id="IPR038009">
    <property type="entry name" value="GlmU_C_LbH"/>
</dbReference>
<dbReference type="InterPro" id="IPR001451">
    <property type="entry name" value="Hexapep"/>
</dbReference>
<dbReference type="InterPro" id="IPR025877">
    <property type="entry name" value="MobA-like_NTP_Trfase"/>
</dbReference>
<dbReference type="InterPro" id="IPR029044">
    <property type="entry name" value="Nucleotide-diphossugar_trans"/>
</dbReference>
<dbReference type="InterPro" id="IPR011004">
    <property type="entry name" value="Trimer_LpxA-like_sf"/>
</dbReference>
<dbReference type="NCBIfam" id="TIGR01173">
    <property type="entry name" value="glmU"/>
    <property type="match status" value="1"/>
</dbReference>
<dbReference type="NCBIfam" id="NF010940">
    <property type="entry name" value="PRK14360.1"/>
    <property type="match status" value="1"/>
</dbReference>
<dbReference type="PANTHER" id="PTHR43584:SF3">
    <property type="entry name" value="BIFUNCTIONAL PROTEIN GLMU"/>
    <property type="match status" value="1"/>
</dbReference>
<dbReference type="PANTHER" id="PTHR43584">
    <property type="entry name" value="NUCLEOTIDYL TRANSFERASE"/>
    <property type="match status" value="1"/>
</dbReference>
<dbReference type="Pfam" id="PF00132">
    <property type="entry name" value="Hexapep"/>
    <property type="match status" value="2"/>
</dbReference>
<dbReference type="Pfam" id="PF14602">
    <property type="entry name" value="Hexapep_2"/>
    <property type="match status" value="1"/>
</dbReference>
<dbReference type="Pfam" id="PF12804">
    <property type="entry name" value="NTP_transf_3"/>
    <property type="match status" value="1"/>
</dbReference>
<dbReference type="SUPFAM" id="SSF53448">
    <property type="entry name" value="Nucleotide-diphospho-sugar transferases"/>
    <property type="match status" value="1"/>
</dbReference>
<dbReference type="SUPFAM" id="SSF51161">
    <property type="entry name" value="Trimeric LpxA-like enzymes"/>
    <property type="match status" value="1"/>
</dbReference>
<name>GLMU_PROM5</name>